<organism>
    <name type="scientific">Leptothrix cholodnii (strain ATCC 51168 / LMG 8142 / SP-6)</name>
    <name type="common">Leptothrix discophora (strain SP-6)</name>
    <dbReference type="NCBI Taxonomy" id="395495"/>
    <lineage>
        <taxon>Bacteria</taxon>
        <taxon>Pseudomonadati</taxon>
        <taxon>Pseudomonadota</taxon>
        <taxon>Betaproteobacteria</taxon>
        <taxon>Burkholderiales</taxon>
        <taxon>Sphaerotilaceae</taxon>
        <taxon>Leptothrix</taxon>
    </lineage>
</organism>
<name>GPMA_LEPCP</name>
<proteinExistence type="inferred from homology"/>
<gene>
    <name evidence="1" type="primary">gpmA</name>
    <name type="ordered locus">Lcho_3514</name>
</gene>
<sequence length="247" mass="27601">MYKLVLIRHGESTWNLENRFTGWTDVELTPTGVSQAQQAGRLLKEGGYEFDIAYTSVLKRAIWTLWHALDQMDRTWLPVAHSWRLNERHYGALQGLNKGDMAKQYGDAQVLIWRRSYDTPPPALEADDPRGQRQDVRYAKLDAEQVPLTECLKDTVARVLPFWNDSIAPAILSGKRVLIAAHGNSIRAMVKYLDGISDADIVNLNIPNGVPLVYELDADLKPIRSYYLGDAEAVAKAAAAVANQGKA</sequence>
<comment type="function">
    <text evidence="1">Catalyzes the interconversion of 2-phosphoglycerate and 3-phosphoglycerate.</text>
</comment>
<comment type="catalytic activity">
    <reaction evidence="1">
        <text>(2R)-2-phosphoglycerate = (2R)-3-phosphoglycerate</text>
        <dbReference type="Rhea" id="RHEA:15901"/>
        <dbReference type="ChEBI" id="CHEBI:58272"/>
        <dbReference type="ChEBI" id="CHEBI:58289"/>
        <dbReference type="EC" id="5.4.2.11"/>
    </reaction>
</comment>
<comment type="pathway">
    <text evidence="1">Carbohydrate degradation; glycolysis; pyruvate from D-glyceraldehyde 3-phosphate: step 3/5.</text>
</comment>
<comment type="subunit">
    <text evidence="1">Homodimer.</text>
</comment>
<comment type="similarity">
    <text evidence="1">Belongs to the phosphoglycerate mutase family. BPG-dependent PGAM subfamily.</text>
</comment>
<reference key="1">
    <citation type="submission" date="2008-03" db="EMBL/GenBank/DDBJ databases">
        <title>Complete sequence of Leptothrix cholodnii SP-6.</title>
        <authorList>
            <consortium name="US DOE Joint Genome Institute"/>
            <person name="Copeland A."/>
            <person name="Lucas S."/>
            <person name="Lapidus A."/>
            <person name="Glavina del Rio T."/>
            <person name="Dalin E."/>
            <person name="Tice H."/>
            <person name="Bruce D."/>
            <person name="Goodwin L."/>
            <person name="Pitluck S."/>
            <person name="Chertkov O."/>
            <person name="Brettin T."/>
            <person name="Detter J.C."/>
            <person name="Han C."/>
            <person name="Kuske C.R."/>
            <person name="Schmutz J."/>
            <person name="Larimer F."/>
            <person name="Land M."/>
            <person name="Hauser L."/>
            <person name="Kyrpides N."/>
            <person name="Lykidis A."/>
            <person name="Emerson D."/>
            <person name="Richardson P."/>
        </authorList>
    </citation>
    <scope>NUCLEOTIDE SEQUENCE [LARGE SCALE GENOMIC DNA]</scope>
    <source>
        <strain>ATCC 51168 / LMG 8142 / SP-6</strain>
    </source>
</reference>
<dbReference type="EC" id="5.4.2.11" evidence="1"/>
<dbReference type="EMBL" id="CP001013">
    <property type="protein sequence ID" value="ACB35768.1"/>
    <property type="molecule type" value="Genomic_DNA"/>
</dbReference>
<dbReference type="RefSeq" id="WP_012348515.1">
    <property type="nucleotide sequence ID" value="NC_010524.1"/>
</dbReference>
<dbReference type="SMR" id="B1Y3R5"/>
<dbReference type="STRING" id="395495.Lcho_3514"/>
<dbReference type="KEGG" id="lch:Lcho_3514"/>
<dbReference type="eggNOG" id="COG0588">
    <property type="taxonomic scope" value="Bacteria"/>
</dbReference>
<dbReference type="HOGENOM" id="CLU_033323_1_1_4"/>
<dbReference type="OrthoDB" id="9781415at2"/>
<dbReference type="UniPathway" id="UPA00109">
    <property type="reaction ID" value="UER00186"/>
</dbReference>
<dbReference type="Proteomes" id="UP000001693">
    <property type="component" value="Chromosome"/>
</dbReference>
<dbReference type="GO" id="GO:0004619">
    <property type="term" value="F:phosphoglycerate mutase activity"/>
    <property type="evidence" value="ECO:0007669"/>
    <property type="project" value="UniProtKB-EC"/>
</dbReference>
<dbReference type="GO" id="GO:0006094">
    <property type="term" value="P:gluconeogenesis"/>
    <property type="evidence" value="ECO:0007669"/>
    <property type="project" value="UniProtKB-UniRule"/>
</dbReference>
<dbReference type="GO" id="GO:0006096">
    <property type="term" value="P:glycolytic process"/>
    <property type="evidence" value="ECO:0007669"/>
    <property type="project" value="UniProtKB-UniRule"/>
</dbReference>
<dbReference type="CDD" id="cd07067">
    <property type="entry name" value="HP_PGM_like"/>
    <property type="match status" value="1"/>
</dbReference>
<dbReference type="FunFam" id="3.40.50.1240:FF:000003">
    <property type="entry name" value="2,3-bisphosphoglycerate-dependent phosphoglycerate mutase"/>
    <property type="match status" value="1"/>
</dbReference>
<dbReference type="Gene3D" id="3.40.50.1240">
    <property type="entry name" value="Phosphoglycerate mutase-like"/>
    <property type="match status" value="1"/>
</dbReference>
<dbReference type="HAMAP" id="MF_01039">
    <property type="entry name" value="PGAM_GpmA"/>
    <property type="match status" value="1"/>
</dbReference>
<dbReference type="InterPro" id="IPR013078">
    <property type="entry name" value="His_Pase_superF_clade-1"/>
</dbReference>
<dbReference type="InterPro" id="IPR029033">
    <property type="entry name" value="His_PPase_superfam"/>
</dbReference>
<dbReference type="InterPro" id="IPR001345">
    <property type="entry name" value="PG/BPGM_mutase_AS"/>
</dbReference>
<dbReference type="InterPro" id="IPR005952">
    <property type="entry name" value="Phosphogly_mut1"/>
</dbReference>
<dbReference type="NCBIfam" id="TIGR01258">
    <property type="entry name" value="pgm_1"/>
    <property type="match status" value="1"/>
</dbReference>
<dbReference type="NCBIfam" id="NF010713">
    <property type="entry name" value="PRK14115.1"/>
    <property type="match status" value="1"/>
</dbReference>
<dbReference type="PANTHER" id="PTHR11931">
    <property type="entry name" value="PHOSPHOGLYCERATE MUTASE"/>
    <property type="match status" value="1"/>
</dbReference>
<dbReference type="Pfam" id="PF00300">
    <property type="entry name" value="His_Phos_1"/>
    <property type="match status" value="1"/>
</dbReference>
<dbReference type="PIRSF" id="PIRSF000709">
    <property type="entry name" value="6PFK_2-Ptase"/>
    <property type="match status" value="1"/>
</dbReference>
<dbReference type="SMART" id="SM00855">
    <property type="entry name" value="PGAM"/>
    <property type="match status" value="1"/>
</dbReference>
<dbReference type="SUPFAM" id="SSF53254">
    <property type="entry name" value="Phosphoglycerate mutase-like"/>
    <property type="match status" value="1"/>
</dbReference>
<dbReference type="PROSITE" id="PS00175">
    <property type="entry name" value="PG_MUTASE"/>
    <property type="match status" value="1"/>
</dbReference>
<keyword id="KW-0312">Gluconeogenesis</keyword>
<keyword id="KW-0324">Glycolysis</keyword>
<keyword id="KW-0413">Isomerase</keyword>
<keyword id="KW-1185">Reference proteome</keyword>
<protein>
    <recommendedName>
        <fullName evidence="1">2,3-bisphosphoglycerate-dependent phosphoglycerate mutase</fullName>
        <shortName evidence="1">BPG-dependent PGAM</shortName>
        <shortName evidence="1">PGAM</shortName>
        <shortName evidence="1">Phosphoglyceromutase</shortName>
        <shortName evidence="1">dPGM</shortName>
        <ecNumber evidence="1">5.4.2.11</ecNumber>
    </recommendedName>
</protein>
<feature type="chain" id="PRO_1000135957" description="2,3-bisphosphoglycerate-dependent phosphoglycerate mutase">
    <location>
        <begin position="1"/>
        <end position="247"/>
    </location>
</feature>
<feature type="active site" description="Tele-phosphohistidine intermediate" evidence="1">
    <location>
        <position position="9"/>
    </location>
</feature>
<feature type="active site" description="Proton donor/acceptor" evidence="1">
    <location>
        <position position="87"/>
    </location>
</feature>
<feature type="binding site" evidence="1">
    <location>
        <begin position="8"/>
        <end position="15"/>
    </location>
    <ligand>
        <name>substrate</name>
    </ligand>
</feature>
<feature type="binding site" evidence="1">
    <location>
        <begin position="21"/>
        <end position="22"/>
    </location>
    <ligand>
        <name>substrate</name>
    </ligand>
</feature>
<feature type="binding site" evidence="1">
    <location>
        <position position="60"/>
    </location>
    <ligand>
        <name>substrate</name>
    </ligand>
</feature>
<feature type="binding site" evidence="1">
    <location>
        <begin position="87"/>
        <end position="90"/>
    </location>
    <ligand>
        <name>substrate</name>
    </ligand>
</feature>
<feature type="binding site" evidence="1">
    <location>
        <position position="98"/>
    </location>
    <ligand>
        <name>substrate</name>
    </ligand>
</feature>
<feature type="binding site" evidence="1">
    <location>
        <begin position="114"/>
        <end position="115"/>
    </location>
    <ligand>
        <name>substrate</name>
    </ligand>
</feature>
<feature type="binding site" evidence="1">
    <location>
        <begin position="183"/>
        <end position="184"/>
    </location>
    <ligand>
        <name>substrate</name>
    </ligand>
</feature>
<feature type="site" description="Transition state stabilizer" evidence="1">
    <location>
        <position position="182"/>
    </location>
</feature>
<accession>B1Y3R5</accession>
<evidence type="ECO:0000255" key="1">
    <source>
        <dbReference type="HAMAP-Rule" id="MF_01039"/>
    </source>
</evidence>